<protein>
    <recommendedName>
        <fullName evidence="1">Cardiolipin synthase B</fullName>
        <shortName evidence="1">CL synthase</shortName>
        <ecNumber evidence="1">2.7.8.-</ecNumber>
    </recommendedName>
</protein>
<evidence type="ECO:0000255" key="1">
    <source>
        <dbReference type="HAMAP-Rule" id="MF_01917"/>
    </source>
</evidence>
<evidence type="ECO:0000256" key="2">
    <source>
        <dbReference type="SAM" id="MobiDB-lite"/>
    </source>
</evidence>
<evidence type="ECO:0000305" key="3"/>
<feature type="chain" id="PRO_0000201288" description="Cardiolipin synthase B">
    <location>
        <begin position="1"/>
        <end position="413"/>
    </location>
</feature>
<feature type="domain" description="PLD phosphodiesterase 1" evidence="1">
    <location>
        <begin position="108"/>
        <end position="135"/>
    </location>
</feature>
<feature type="domain" description="PLD phosphodiesterase 2" evidence="1">
    <location>
        <begin position="285"/>
        <end position="312"/>
    </location>
</feature>
<feature type="region of interest" description="Disordered" evidence="2">
    <location>
        <begin position="388"/>
        <end position="413"/>
    </location>
</feature>
<feature type="active site" evidence="1">
    <location>
        <position position="113"/>
    </location>
</feature>
<feature type="active site" evidence="1">
    <location>
        <position position="115"/>
    </location>
</feature>
<feature type="active site" evidence="1">
    <location>
        <position position="120"/>
    </location>
</feature>
<feature type="active site" evidence="1">
    <location>
        <position position="290"/>
    </location>
</feature>
<feature type="active site" evidence="1">
    <location>
        <position position="292"/>
    </location>
</feature>
<feature type="active site" evidence="1">
    <location>
        <position position="297"/>
    </location>
</feature>
<feature type="sequence conflict" description="In Ref. 2; AAP16251." evidence="3" ref="2">
    <original>S</original>
    <variation>A</variation>
    <location>
        <position position="133"/>
    </location>
</feature>
<accession>P59715</accession>
<gene>
    <name evidence="1" type="primary">clsB</name>
    <name type="synonym">ybhO</name>
    <name type="ordered locus">SF0739</name>
    <name type="ordered locus">S0780</name>
</gene>
<organism>
    <name type="scientific">Shigella flexneri</name>
    <dbReference type="NCBI Taxonomy" id="623"/>
    <lineage>
        <taxon>Bacteria</taxon>
        <taxon>Pseudomonadati</taxon>
        <taxon>Pseudomonadota</taxon>
        <taxon>Gammaproteobacteria</taxon>
        <taxon>Enterobacterales</taxon>
        <taxon>Enterobacteriaceae</taxon>
        <taxon>Shigella</taxon>
    </lineage>
</organism>
<sequence length="413" mass="47636">MKCSWREGNKIQLLENGEQYYPAVFKAIGEAQERIILETFIWFEDNVGKQLHAALLAAAQRGVKAEVLLDGYGSPDLSDEFVNELTAAGVVFRYYDPRPRLFGMRTNVFRRMHRKIVVIDARIAFIGGLNYSSEHMSSYGPEAKQDYAVRLEGPIVEDILQFELENLPGQSAARRWWRRHHKAEENRQPGEAQVLLVWRDNEEHRDDIERHYLKMLTQAQREVIIANAYFFPGYRFLHALRKAARRGVRIKLIIQGEPDMPIVRVGARLLYNYLVKGGVQVFEYRRRPLHGKVALMDDHWATVGSSNLDPLSLSLNLEANVIIHDRHFNQTLRDNLNGIIAADCQQVDETMLPKRTWWNLTKSVLAFHFLRHFPALVGWLPAHTPRLTQVDPPAQPTMETQDRVETENTGVNP</sequence>
<name>CLSB_SHIFL</name>
<reference key="1">
    <citation type="journal article" date="2002" name="Nucleic Acids Res.">
        <title>Genome sequence of Shigella flexneri 2a: insights into pathogenicity through comparison with genomes of Escherichia coli K12 and O157.</title>
        <authorList>
            <person name="Jin Q."/>
            <person name="Yuan Z."/>
            <person name="Xu J."/>
            <person name="Wang Y."/>
            <person name="Shen Y."/>
            <person name="Lu W."/>
            <person name="Wang J."/>
            <person name="Liu H."/>
            <person name="Yang J."/>
            <person name="Yang F."/>
            <person name="Zhang X."/>
            <person name="Zhang J."/>
            <person name="Yang G."/>
            <person name="Wu H."/>
            <person name="Qu D."/>
            <person name="Dong J."/>
            <person name="Sun L."/>
            <person name="Xue Y."/>
            <person name="Zhao A."/>
            <person name="Gao Y."/>
            <person name="Zhu J."/>
            <person name="Kan B."/>
            <person name="Ding K."/>
            <person name="Chen S."/>
            <person name="Cheng H."/>
            <person name="Yao Z."/>
            <person name="He B."/>
            <person name="Chen R."/>
            <person name="Ma D."/>
            <person name="Qiang B."/>
            <person name="Wen Y."/>
            <person name="Hou Y."/>
            <person name="Yu J."/>
        </authorList>
    </citation>
    <scope>NUCLEOTIDE SEQUENCE [LARGE SCALE GENOMIC DNA]</scope>
    <source>
        <strain>301 / Serotype 2a</strain>
    </source>
</reference>
<reference key="2">
    <citation type="journal article" date="2003" name="Infect. Immun.">
        <title>Complete genome sequence and comparative genomics of Shigella flexneri serotype 2a strain 2457T.</title>
        <authorList>
            <person name="Wei J."/>
            <person name="Goldberg M.B."/>
            <person name="Burland V."/>
            <person name="Venkatesan M.M."/>
            <person name="Deng W."/>
            <person name="Fournier G."/>
            <person name="Mayhew G.F."/>
            <person name="Plunkett G. III"/>
            <person name="Rose D.J."/>
            <person name="Darling A."/>
            <person name="Mau B."/>
            <person name="Perna N.T."/>
            <person name="Payne S.M."/>
            <person name="Runyen-Janecky L.J."/>
            <person name="Zhou S."/>
            <person name="Schwartz D.C."/>
            <person name="Blattner F.R."/>
        </authorList>
    </citation>
    <scope>NUCLEOTIDE SEQUENCE [LARGE SCALE GENOMIC DNA]</scope>
    <source>
        <strain>ATCC 700930 / 2457T / Serotype 2a</strain>
    </source>
</reference>
<comment type="function">
    <text evidence="1">Catalyzes the phosphatidyl group transfer from one phosphatidylglycerol molecule to another to form cardiolipin (CL) (diphosphatidylglycerol) and glycerol.</text>
</comment>
<comment type="catalytic activity">
    <reaction evidence="1">
        <text>2 a 1,2-diacyl-sn-glycero-3-phospho-(1'-sn-glycerol) = a cardiolipin + glycerol</text>
        <dbReference type="Rhea" id="RHEA:31451"/>
        <dbReference type="ChEBI" id="CHEBI:17754"/>
        <dbReference type="ChEBI" id="CHEBI:62237"/>
        <dbReference type="ChEBI" id="CHEBI:64716"/>
    </reaction>
</comment>
<comment type="subcellular location">
    <subcellularLocation>
        <location evidence="1">Cell membrane</location>
        <topology evidence="1">Peripheral membrane protein</topology>
    </subcellularLocation>
</comment>
<comment type="similarity">
    <text evidence="1">Belongs to the phospholipase D family. Cardiolipin synthase subfamily. ClsB sub-subfamily.</text>
</comment>
<keyword id="KW-1003">Cell membrane</keyword>
<keyword id="KW-0444">Lipid biosynthesis</keyword>
<keyword id="KW-0443">Lipid metabolism</keyword>
<keyword id="KW-0472">Membrane</keyword>
<keyword id="KW-0594">Phospholipid biosynthesis</keyword>
<keyword id="KW-1208">Phospholipid metabolism</keyword>
<keyword id="KW-1185">Reference proteome</keyword>
<keyword id="KW-0677">Repeat</keyword>
<keyword id="KW-0808">Transferase</keyword>
<proteinExistence type="inferred from homology"/>
<dbReference type="EC" id="2.7.8.-" evidence="1"/>
<dbReference type="EMBL" id="AE005674">
    <property type="protein sequence ID" value="AAN42374.1"/>
    <property type="molecule type" value="Genomic_DNA"/>
</dbReference>
<dbReference type="EMBL" id="AE014073">
    <property type="protein sequence ID" value="AAP16251.1"/>
    <property type="molecule type" value="Genomic_DNA"/>
</dbReference>
<dbReference type="RefSeq" id="NP_706667.1">
    <property type="nucleotide sequence ID" value="NC_004337.2"/>
</dbReference>
<dbReference type="RefSeq" id="WP_000650365.1">
    <property type="nucleotide sequence ID" value="NZ_CP123365.1"/>
</dbReference>
<dbReference type="SMR" id="P59715"/>
<dbReference type="STRING" id="198214.SF0739"/>
<dbReference type="PaxDb" id="198214-SF0739"/>
<dbReference type="GeneID" id="1023712"/>
<dbReference type="KEGG" id="sfl:SF0739"/>
<dbReference type="KEGG" id="sfx:S0780"/>
<dbReference type="PATRIC" id="fig|198214.7.peg.860"/>
<dbReference type="HOGENOM" id="CLU_038053_0_0_6"/>
<dbReference type="Proteomes" id="UP000001006">
    <property type="component" value="Chromosome"/>
</dbReference>
<dbReference type="Proteomes" id="UP000002673">
    <property type="component" value="Chromosome"/>
</dbReference>
<dbReference type="GO" id="GO:0005886">
    <property type="term" value="C:plasma membrane"/>
    <property type="evidence" value="ECO:0007669"/>
    <property type="project" value="UniProtKB-SubCell"/>
</dbReference>
<dbReference type="GO" id="GO:0008808">
    <property type="term" value="F:cardiolipin synthase activity"/>
    <property type="evidence" value="ECO:0007669"/>
    <property type="project" value="InterPro"/>
</dbReference>
<dbReference type="GO" id="GO:0032049">
    <property type="term" value="P:cardiolipin biosynthetic process"/>
    <property type="evidence" value="ECO:0007669"/>
    <property type="project" value="InterPro"/>
</dbReference>
<dbReference type="CDD" id="cd09110">
    <property type="entry name" value="PLDc_CLS_1"/>
    <property type="match status" value="1"/>
</dbReference>
<dbReference type="CDD" id="cd09159">
    <property type="entry name" value="PLDc_ybhO_like_2"/>
    <property type="match status" value="1"/>
</dbReference>
<dbReference type="FunFam" id="3.30.870.10:FF:000015">
    <property type="entry name" value="Cardiolipin synthase B"/>
    <property type="match status" value="1"/>
</dbReference>
<dbReference type="FunFam" id="3.30.870.10:FF:000016">
    <property type="entry name" value="Cardiolipin synthase B"/>
    <property type="match status" value="1"/>
</dbReference>
<dbReference type="Gene3D" id="3.30.870.10">
    <property type="entry name" value="Endonuclease Chain A"/>
    <property type="match status" value="2"/>
</dbReference>
<dbReference type="HAMAP" id="MF_01917">
    <property type="entry name" value="Cardiolipin_synth_ClsB"/>
    <property type="match status" value="1"/>
</dbReference>
<dbReference type="InterPro" id="IPR030872">
    <property type="entry name" value="Cardiolipin_synth_ClsB"/>
</dbReference>
<dbReference type="InterPro" id="IPR025202">
    <property type="entry name" value="PLD-like_dom"/>
</dbReference>
<dbReference type="InterPro" id="IPR001736">
    <property type="entry name" value="PLipase_D/transphosphatidylase"/>
</dbReference>
<dbReference type="NCBIfam" id="NF008427">
    <property type="entry name" value="PRK11263.1"/>
    <property type="match status" value="1"/>
</dbReference>
<dbReference type="PANTHER" id="PTHR21248">
    <property type="entry name" value="CARDIOLIPIN SYNTHASE"/>
    <property type="match status" value="1"/>
</dbReference>
<dbReference type="PANTHER" id="PTHR21248:SF23">
    <property type="entry name" value="CARDIOLIPIN SYNTHASE B"/>
    <property type="match status" value="1"/>
</dbReference>
<dbReference type="Pfam" id="PF13091">
    <property type="entry name" value="PLDc_2"/>
    <property type="match status" value="2"/>
</dbReference>
<dbReference type="SMART" id="SM00155">
    <property type="entry name" value="PLDc"/>
    <property type="match status" value="2"/>
</dbReference>
<dbReference type="SUPFAM" id="SSF56024">
    <property type="entry name" value="Phospholipase D/nuclease"/>
    <property type="match status" value="2"/>
</dbReference>
<dbReference type="PROSITE" id="PS50035">
    <property type="entry name" value="PLD"/>
    <property type="match status" value="2"/>
</dbReference>